<dbReference type="EC" id="1.3.98.1"/>
<dbReference type="EMBL" id="AP007281">
    <property type="protein sequence ID" value="BAG24635.1"/>
    <property type="molecule type" value="Genomic_DNA"/>
</dbReference>
<dbReference type="RefSeq" id="WP_003669699.1">
    <property type="nucleotide sequence ID" value="NC_010609.1"/>
</dbReference>
<dbReference type="SMR" id="B2G5A3"/>
<dbReference type="KEGG" id="lrf:LAR_0119"/>
<dbReference type="HOGENOM" id="CLU_042042_0_0_9"/>
<dbReference type="UniPathway" id="UPA00070"/>
<dbReference type="GO" id="GO:0005737">
    <property type="term" value="C:cytoplasm"/>
    <property type="evidence" value="ECO:0007669"/>
    <property type="project" value="UniProtKB-SubCell"/>
</dbReference>
<dbReference type="GO" id="GO:1990663">
    <property type="term" value="F:dihydroorotate dehydrogenase (fumarate) activity"/>
    <property type="evidence" value="ECO:0007669"/>
    <property type="project" value="UniProtKB-EC"/>
</dbReference>
<dbReference type="GO" id="GO:0006207">
    <property type="term" value="P:'de novo' pyrimidine nucleobase biosynthetic process"/>
    <property type="evidence" value="ECO:0007669"/>
    <property type="project" value="InterPro"/>
</dbReference>
<dbReference type="GO" id="GO:0044205">
    <property type="term" value="P:'de novo' UMP biosynthetic process"/>
    <property type="evidence" value="ECO:0007669"/>
    <property type="project" value="UniProtKB-UniRule"/>
</dbReference>
<dbReference type="CDD" id="cd04740">
    <property type="entry name" value="DHOD_1B_like"/>
    <property type="match status" value="1"/>
</dbReference>
<dbReference type="FunFam" id="3.20.20.70:FF:000027">
    <property type="entry name" value="Dihydropyrimidine dehydrogenase [NADP(+)]"/>
    <property type="match status" value="1"/>
</dbReference>
<dbReference type="Gene3D" id="3.20.20.70">
    <property type="entry name" value="Aldolase class I"/>
    <property type="match status" value="1"/>
</dbReference>
<dbReference type="HAMAP" id="MF_00224">
    <property type="entry name" value="DHO_dh_type1"/>
    <property type="match status" value="1"/>
</dbReference>
<dbReference type="InterPro" id="IPR013785">
    <property type="entry name" value="Aldolase_TIM"/>
</dbReference>
<dbReference type="InterPro" id="IPR050074">
    <property type="entry name" value="DHO_dehydrogenase"/>
</dbReference>
<dbReference type="InterPro" id="IPR033888">
    <property type="entry name" value="DHOD_1B"/>
</dbReference>
<dbReference type="InterPro" id="IPR024920">
    <property type="entry name" value="Dihydroorotate_DH_1"/>
</dbReference>
<dbReference type="InterPro" id="IPR012135">
    <property type="entry name" value="Dihydroorotate_DH_1_2"/>
</dbReference>
<dbReference type="InterPro" id="IPR005720">
    <property type="entry name" value="Dihydroorotate_DH_cat"/>
</dbReference>
<dbReference type="InterPro" id="IPR001295">
    <property type="entry name" value="Dihydroorotate_DH_CS"/>
</dbReference>
<dbReference type="InterPro" id="IPR049622">
    <property type="entry name" value="Dihydroorotate_DH_I"/>
</dbReference>
<dbReference type="NCBIfam" id="NF005574">
    <property type="entry name" value="PRK07259.1"/>
    <property type="match status" value="1"/>
</dbReference>
<dbReference type="NCBIfam" id="TIGR01037">
    <property type="entry name" value="pyrD_sub1_fam"/>
    <property type="match status" value="1"/>
</dbReference>
<dbReference type="PANTHER" id="PTHR48109:SF1">
    <property type="entry name" value="DIHYDROOROTATE DEHYDROGENASE (FUMARATE)"/>
    <property type="match status" value="1"/>
</dbReference>
<dbReference type="PANTHER" id="PTHR48109">
    <property type="entry name" value="DIHYDROOROTATE DEHYDROGENASE (QUINONE), MITOCHONDRIAL-RELATED"/>
    <property type="match status" value="1"/>
</dbReference>
<dbReference type="Pfam" id="PF01180">
    <property type="entry name" value="DHO_dh"/>
    <property type="match status" value="1"/>
</dbReference>
<dbReference type="PIRSF" id="PIRSF000164">
    <property type="entry name" value="DHO_oxidase"/>
    <property type="match status" value="1"/>
</dbReference>
<dbReference type="SUPFAM" id="SSF51395">
    <property type="entry name" value="FMN-linked oxidoreductases"/>
    <property type="match status" value="1"/>
</dbReference>
<dbReference type="PROSITE" id="PS00911">
    <property type="entry name" value="DHODEHASE_1"/>
    <property type="match status" value="1"/>
</dbReference>
<dbReference type="PROSITE" id="PS00912">
    <property type="entry name" value="DHODEHASE_2"/>
    <property type="match status" value="1"/>
</dbReference>
<organism>
    <name type="scientific">Limosilactobacillus reuteri subsp. reuteri (strain JCM 1112)</name>
    <name type="common">Lactobacillus reuteri</name>
    <dbReference type="NCBI Taxonomy" id="557433"/>
    <lineage>
        <taxon>Bacteria</taxon>
        <taxon>Bacillati</taxon>
        <taxon>Bacillota</taxon>
        <taxon>Bacilli</taxon>
        <taxon>Lactobacillales</taxon>
        <taxon>Lactobacillaceae</taxon>
        <taxon>Limosilactobacillus</taxon>
    </lineage>
</organism>
<reference key="1">
    <citation type="journal article" date="2008" name="DNA Res.">
        <title>Comparative genome analysis of Lactobacillus reuteri and Lactobacillus fermentum reveal a genomic island for reuterin and cobalamin production.</title>
        <authorList>
            <person name="Morita H."/>
            <person name="Toh H."/>
            <person name="Fukuda S."/>
            <person name="Horikawa H."/>
            <person name="Oshima K."/>
            <person name="Suzuki T."/>
            <person name="Murakami M."/>
            <person name="Hisamatsu S."/>
            <person name="Kato Y."/>
            <person name="Takizawa T."/>
            <person name="Fukuoka H."/>
            <person name="Yoshimura T."/>
            <person name="Itoh K."/>
            <person name="O'Sullivan D.J."/>
            <person name="McKay L.L."/>
            <person name="Ohno H."/>
            <person name="Kikuchi J."/>
            <person name="Masaoka T."/>
            <person name="Hattori M."/>
        </authorList>
    </citation>
    <scope>NUCLEOTIDE SEQUENCE [LARGE SCALE GENOMIC DNA]</scope>
    <source>
        <strain>JCM 1112</strain>
    </source>
</reference>
<protein>
    <recommendedName>
        <fullName>Dihydroorotate dehydrogenase A (fumarate)</fullName>
        <shortName>DHOD A</shortName>
        <shortName>DHODase A</shortName>
        <shortName>DHOdehase A</shortName>
        <ecNumber>1.3.98.1</ecNumber>
    </recommendedName>
</protein>
<proteinExistence type="inferred from homology"/>
<evidence type="ECO:0000250" key="1"/>
<evidence type="ECO:0000305" key="2"/>
<accession>B2G5A3</accession>
<comment type="function">
    <text evidence="1">Catalyzes the conversion of dihydroorotate to orotate with fumarate as the electron acceptor.</text>
</comment>
<comment type="catalytic activity">
    <reaction>
        <text>(S)-dihydroorotate + fumarate = orotate + succinate</text>
        <dbReference type="Rhea" id="RHEA:30059"/>
        <dbReference type="ChEBI" id="CHEBI:29806"/>
        <dbReference type="ChEBI" id="CHEBI:30031"/>
        <dbReference type="ChEBI" id="CHEBI:30839"/>
        <dbReference type="ChEBI" id="CHEBI:30864"/>
        <dbReference type="EC" id="1.3.98.1"/>
    </reaction>
</comment>
<comment type="cofactor">
    <cofactor evidence="1">
        <name>FMN</name>
        <dbReference type="ChEBI" id="CHEBI:58210"/>
    </cofactor>
    <text evidence="1">Binds 1 FMN per subunit.</text>
</comment>
<comment type="pathway">
    <text>Pyrimidine metabolism; UMP biosynthesis via de novo pathway.</text>
</comment>
<comment type="subunit">
    <text evidence="1">Homodimer.</text>
</comment>
<comment type="subcellular location">
    <subcellularLocation>
        <location evidence="1">Cytoplasm</location>
    </subcellularLocation>
</comment>
<comment type="similarity">
    <text evidence="2">Belongs to the dihydroorotate dehydrogenase family. Type 1 subfamily.</text>
</comment>
<gene>
    <name type="primary">pyrD</name>
    <name type="ordered locus">LAR_0119</name>
</gene>
<name>PYRDA_LIMRJ</name>
<sequence>MQETQRLAVELPGLSLKNPIIAASGTCGYGQEAAKKYNLNHLGSLVLKSTTLYPRQGNPRPRVCETSAGWLNANGLQNVGITAATNEKIPWLRKNYPQLPIIASAAGFSEDEYVKVVSEFANTAGVKAIELNVSCPNVKHGGMAMGTDPEVLQRLVKQVVKAALGIPIYVKLTPNVTNIVPLAQAAEQGGANGLTMINTLTGLSIDLKTRRPALANVTGGLSGPAIKPLALRMIHQVRQVSSLPIIGVGGIESAEDVLEFMMAGANAVQIGAASFHDPLACPKIAADLPIVMDRYGIKKLTDLWEVRF</sequence>
<feature type="chain" id="PRO_1000100224" description="Dihydroorotate dehydrogenase A (fumarate)">
    <location>
        <begin position="1"/>
        <end position="308"/>
    </location>
</feature>
<feature type="active site" description="Nucleophile">
    <location>
        <position position="135"/>
    </location>
</feature>
<feature type="binding site" evidence="1">
    <location>
        <position position="24"/>
    </location>
    <ligand>
        <name>FMN</name>
        <dbReference type="ChEBI" id="CHEBI:58210"/>
    </ligand>
</feature>
<feature type="binding site" evidence="1">
    <location>
        <begin position="48"/>
        <end position="49"/>
    </location>
    <ligand>
        <name>FMN</name>
        <dbReference type="ChEBI" id="CHEBI:58210"/>
    </ligand>
</feature>
<feature type="binding site" evidence="1">
    <location>
        <position position="48"/>
    </location>
    <ligand>
        <name>substrate</name>
    </ligand>
</feature>
<feature type="binding site" evidence="1">
    <location>
        <begin position="72"/>
        <end position="76"/>
    </location>
    <ligand>
        <name>substrate</name>
    </ligand>
</feature>
<feature type="binding site" evidence="1">
    <location>
        <position position="132"/>
    </location>
    <ligand>
        <name>FMN</name>
        <dbReference type="ChEBI" id="CHEBI:58210"/>
    </ligand>
</feature>
<feature type="binding site" evidence="1">
    <location>
        <position position="132"/>
    </location>
    <ligand>
        <name>substrate</name>
    </ligand>
</feature>
<feature type="binding site" evidence="1">
    <location>
        <position position="171"/>
    </location>
    <ligand>
        <name>FMN</name>
        <dbReference type="ChEBI" id="CHEBI:58210"/>
    </ligand>
</feature>
<feature type="binding site" evidence="1">
    <location>
        <position position="197"/>
    </location>
    <ligand>
        <name>FMN</name>
        <dbReference type="ChEBI" id="CHEBI:58210"/>
    </ligand>
</feature>
<feature type="binding site" evidence="1">
    <location>
        <begin position="198"/>
        <end position="199"/>
    </location>
    <ligand>
        <name>substrate</name>
    </ligand>
</feature>
<feature type="binding site" evidence="1">
    <location>
        <position position="223"/>
    </location>
    <ligand>
        <name>FMN</name>
        <dbReference type="ChEBI" id="CHEBI:58210"/>
    </ligand>
</feature>
<feature type="binding site" evidence="1">
    <location>
        <begin position="249"/>
        <end position="250"/>
    </location>
    <ligand>
        <name>FMN</name>
        <dbReference type="ChEBI" id="CHEBI:58210"/>
    </ligand>
</feature>
<keyword id="KW-0963">Cytoplasm</keyword>
<keyword id="KW-0285">Flavoprotein</keyword>
<keyword id="KW-0288">FMN</keyword>
<keyword id="KW-0560">Oxidoreductase</keyword>
<keyword id="KW-0665">Pyrimidine biosynthesis</keyword>